<reference key="1">
    <citation type="journal article" date="1996" name="J. Biol. Chem.">
        <title>Biological characterization of two novel cathelicidin-derived peptides and identification of structural requirements for their antimicrobial and cell lytic activities.</title>
        <authorList>
            <person name="Skerlavaj B."/>
            <person name="Gennaro R."/>
            <person name="Bagella L."/>
            <person name="Merluzzi L."/>
            <person name="Risso A."/>
            <person name="Zanetti M."/>
        </authorList>
    </citation>
    <scope>NUCLEOTIDE SEQUENCE [MRNA]</scope>
    <source>
        <tissue>Bone marrow</tissue>
    </source>
</reference>
<reference key="2">
    <citation type="journal article" date="2009" name="J. Hered.">
        <title>Sequence analysis and polymorphism discovery in 4 members of the bovine cathelicidin gene family.</title>
        <authorList>
            <person name="Gillenwaters E.N."/>
            <person name="Seabury C.M."/>
            <person name="Elliott J.S."/>
            <person name="Womack J.E."/>
        </authorList>
    </citation>
    <scope>NUCLEOTIDE SEQUENCE [GENOMIC DNA]</scope>
    <source>
        <strain>Isolate 44</strain>
        <strain>Isolate 74</strain>
        <strain>Isolate JEW38</strain>
    </source>
</reference>
<reference key="3">
    <citation type="submission" date="2007-06" db="EMBL/GenBank/DDBJ databases">
        <authorList>
            <consortium name="NIH - Mammalian Gene Collection (MGC) project"/>
        </authorList>
    </citation>
    <scope>NUCLEOTIDE SEQUENCE [LARGE SCALE MRNA]</scope>
    <source>
        <strain>Hereford</strain>
        <tissue>Thymus</tissue>
    </source>
</reference>
<reference key="4">
    <citation type="journal article" date="1996" name="Eur. J. Biochem.">
        <title>Purification and structural characterization of bovine cathelicidins, precursors of antimicrobial peptides.</title>
        <authorList>
            <person name="Storici P."/>
            <person name="Tossi A."/>
            <person name="Lenarcic B."/>
            <person name="Romeo D."/>
        </authorList>
    </citation>
    <scope>CHARACTERIZATION</scope>
</reference>
<evidence type="ECO:0000250" key="1"/>
<evidence type="ECO:0000250" key="2">
    <source>
        <dbReference type="UniProtKB" id="P19660"/>
    </source>
</evidence>
<evidence type="ECO:0000255" key="3"/>
<evidence type="ECO:0000269" key="4">
    <source>
    </source>
</evidence>
<evidence type="ECO:0000305" key="5"/>
<evidence type="ECO:0007829" key="6">
    <source>
        <dbReference type="PDB" id="2NDC"/>
    </source>
</evidence>
<evidence type="ECO:0007829" key="7">
    <source>
        <dbReference type="PDB" id="2NDE"/>
    </source>
</evidence>
<comment type="function">
    <text evidence="4">Exerts a potent antimicrobial activity against Gram-negative and Gram-positive bacteria, including methicillin-resistant Staphylococcus aureus, and fungi.</text>
</comment>
<comment type="subcellular location">
    <subcellularLocation>
        <location evidence="4">Secreted</location>
    </subcellularLocation>
</comment>
<comment type="similarity">
    <text evidence="5">Belongs to the cathelicidin family.</text>
</comment>
<protein>
    <recommendedName>
        <fullName>Cathelicidin-5</fullName>
    </recommendedName>
    <alternativeName>
        <fullName>Antibacterial peptide BMAP-28</fullName>
    </alternativeName>
    <alternativeName>
        <fullName>Myeloid antibacterial peptide 28</fullName>
    </alternativeName>
</protein>
<keyword id="KW-0002">3D-structure</keyword>
<keyword id="KW-0044">Antibiotic</keyword>
<keyword id="KW-0929">Antimicrobial</keyword>
<keyword id="KW-1015">Disulfide bond</keyword>
<keyword id="KW-0873">Pyrrolidone carboxylic acid</keyword>
<keyword id="KW-1185">Reference proteome</keyword>
<keyword id="KW-0964">Secreted</keyword>
<keyword id="KW-0732">Signal</keyword>
<dbReference type="EMBL" id="X97609">
    <property type="protein sequence ID" value="CAA66208.1"/>
    <property type="molecule type" value="mRNA"/>
</dbReference>
<dbReference type="EMBL" id="EU751296">
    <property type="protein sequence ID" value="ACI31918.1"/>
    <property type="molecule type" value="Genomic_DNA"/>
</dbReference>
<dbReference type="EMBL" id="EU751297">
    <property type="protein sequence ID" value="ACI31919.1"/>
    <property type="molecule type" value="Genomic_DNA"/>
</dbReference>
<dbReference type="EMBL" id="EU751302">
    <property type="protein sequence ID" value="ACI31924.1"/>
    <property type="molecule type" value="Genomic_DNA"/>
</dbReference>
<dbReference type="EMBL" id="BC142015">
    <property type="protein sequence ID" value="AAI42016.1"/>
    <property type="molecule type" value="mRNA"/>
</dbReference>
<dbReference type="RefSeq" id="NP_776935.1">
    <property type="nucleotide sequence ID" value="NM_174510.3"/>
</dbReference>
<dbReference type="PDB" id="2NDC">
    <property type="method" value="NMR"/>
    <property type="chains" value="A=132-149"/>
</dbReference>
<dbReference type="PDB" id="2NDE">
    <property type="method" value="NMR"/>
    <property type="chains" value="A=132-149"/>
</dbReference>
<dbReference type="PDBsum" id="2NDC"/>
<dbReference type="PDBsum" id="2NDE"/>
<dbReference type="SMR" id="P54229"/>
<dbReference type="FunCoup" id="P54229">
    <property type="interactions" value="192"/>
</dbReference>
<dbReference type="STRING" id="9913.ENSBTAP00000017763"/>
<dbReference type="PaxDb" id="9913-ENSBTAP00000017763"/>
<dbReference type="PeptideAtlas" id="P54229"/>
<dbReference type="GeneID" id="282167"/>
<dbReference type="KEGG" id="bta:282167"/>
<dbReference type="CTD" id="282167"/>
<dbReference type="eggNOG" id="ENOG502SAES">
    <property type="taxonomic scope" value="Eukaryota"/>
</dbReference>
<dbReference type="HOGENOM" id="CLU_121724_1_1_1"/>
<dbReference type="InParanoid" id="P54229"/>
<dbReference type="OrthoDB" id="9930485at2759"/>
<dbReference type="TreeFam" id="TF338457"/>
<dbReference type="Proteomes" id="UP000009136">
    <property type="component" value="Unplaced"/>
</dbReference>
<dbReference type="GO" id="GO:0005615">
    <property type="term" value="C:extracellular space"/>
    <property type="evidence" value="ECO:0000318"/>
    <property type="project" value="GO_Central"/>
</dbReference>
<dbReference type="GO" id="GO:0001530">
    <property type="term" value="F:lipopolysaccharide binding"/>
    <property type="evidence" value="ECO:0000318"/>
    <property type="project" value="GO_Central"/>
</dbReference>
<dbReference type="GO" id="GO:0061844">
    <property type="term" value="P:antimicrobial humoral immune response mediated by antimicrobial peptide"/>
    <property type="evidence" value="ECO:0000318"/>
    <property type="project" value="GO_Central"/>
</dbReference>
<dbReference type="GO" id="GO:0050829">
    <property type="term" value="P:defense response to Gram-negative bacterium"/>
    <property type="evidence" value="ECO:0000318"/>
    <property type="project" value="GO_Central"/>
</dbReference>
<dbReference type="GO" id="GO:0050830">
    <property type="term" value="P:defense response to Gram-positive bacterium"/>
    <property type="evidence" value="ECO:0000318"/>
    <property type="project" value="GO_Central"/>
</dbReference>
<dbReference type="GO" id="GO:0045087">
    <property type="term" value="P:innate immune response"/>
    <property type="evidence" value="ECO:0000318"/>
    <property type="project" value="GO_Central"/>
</dbReference>
<dbReference type="FunFam" id="3.10.450.10:FF:000003">
    <property type="entry name" value="Cathelicidin antimicrobial peptide"/>
    <property type="match status" value="1"/>
</dbReference>
<dbReference type="Gene3D" id="3.10.450.10">
    <property type="match status" value="1"/>
</dbReference>
<dbReference type="InterPro" id="IPR001894">
    <property type="entry name" value="Cathelicidin-like"/>
</dbReference>
<dbReference type="InterPro" id="IPR018216">
    <property type="entry name" value="Cathelicidin_CS"/>
</dbReference>
<dbReference type="InterPro" id="IPR046350">
    <property type="entry name" value="Cystatin_sf"/>
</dbReference>
<dbReference type="PANTHER" id="PTHR10206">
    <property type="entry name" value="CATHELICIDIN"/>
    <property type="match status" value="1"/>
</dbReference>
<dbReference type="PANTHER" id="PTHR10206:SF2">
    <property type="entry name" value="CATHELICIDIN ANTIMICROBIAL PEPTIDE"/>
    <property type="match status" value="1"/>
</dbReference>
<dbReference type="Pfam" id="PF00666">
    <property type="entry name" value="Cathelicidins"/>
    <property type="match status" value="1"/>
</dbReference>
<dbReference type="SUPFAM" id="SSF54403">
    <property type="entry name" value="Cystatin/monellin"/>
    <property type="match status" value="1"/>
</dbReference>
<dbReference type="PROSITE" id="PS00946">
    <property type="entry name" value="CATHELICIDINS_1"/>
    <property type="match status" value="1"/>
</dbReference>
<dbReference type="PROSITE" id="PS00947">
    <property type="entry name" value="CATHELICIDINS_2"/>
    <property type="match status" value="1"/>
</dbReference>
<gene>
    <name type="primary">CATHL5</name>
    <name type="synonym">BMAP28</name>
</gene>
<name>CTHL5_BOVIN</name>
<proteinExistence type="evidence at protein level"/>
<sequence length="159" mass="17616">METQRASLSLGRWSLWLLLLGLALPSASAQALSYREAVLRAVDQLNEKSSEANLYRLLELDPPPKEDDENPNIPKPVSFRVKETVCPRTSQQSPEQCDFKENGLLKECVGTVTLDQVGSNFDITCAVPQSVGGLRSLGRKILRAWKKYGPIIVPIIRIG</sequence>
<accession>P54229</accession>
<accession>A5PJ96</accession>
<accession>B9UKL6</accession>
<organism>
    <name type="scientific">Bos taurus</name>
    <name type="common">Bovine</name>
    <dbReference type="NCBI Taxonomy" id="9913"/>
    <lineage>
        <taxon>Eukaryota</taxon>
        <taxon>Metazoa</taxon>
        <taxon>Chordata</taxon>
        <taxon>Craniata</taxon>
        <taxon>Vertebrata</taxon>
        <taxon>Euteleostomi</taxon>
        <taxon>Mammalia</taxon>
        <taxon>Eutheria</taxon>
        <taxon>Laurasiatheria</taxon>
        <taxon>Artiodactyla</taxon>
        <taxon>Ruminantia</taxon>
        <taxon>Pecora</taxon>
        <taxon>Bovidae</taxon>
        <taxon>Bovinae</taxon>
        <taxon>Bos</taxon>
    </lineage>
</organism>
<feature type="signal peptide" evidence="3">
    <location>
        <begin position="1"/>
        <end position="29"/>
    </location>
</feature>
<feature type="propeptide" id="PRO_0000004716">
    <location>
        <begin position="30"/>
        <end position="131"/>
    </location>
</feature>
<feature type="peptide" id="PRO_0000004717" description="Cathelicidin-5">
    <location>
        <begin position="132"/>
        <end position="159"/>
    </location>
</feature>
<feature type="modified residue" description="Pyrrolidone carboxylic acid" evidence="2">
    <location>
        <position position="30"/>
    </location>
</feature>
<feature type="disulfide bond" evidence="1">
    <location>
        <begin position="86"/>
        <end position="97"/>
    </location>
</feature>
<feature type="disulfide bond" evidence="1">
    <location>
        <begin position="108"/>
        <end position="125"/>
    </location>
</feature>
<feature type="turn" evidence="6">
    <location>
        <begin position="134"/>
        <end position="136"/>
    </location>
</feature>
<feature type="helix" evidence="6">
    <location>
        <begin position="137"/>
        <end position="143"/>
    </location>
</feature>
<feature type="turn" evidence="7">
    <location>
        <begin position="146"/>
        <end position="148"/>
    </location>
</feature>